<dbReference type="EC" id="6.1.1.12"/>
<dbReference type="EMBL" id="AP008226">
    <property type="protein sequence ID" value="BAD70534.1"/>
    <property type="molecule type" value="Genomic_DNA"/>
</dbReference>
<dbReference type="RefSeq" id="YP_143977.1">
    <property type="nucleotide sequence ID" value="NC_006461.1"/>
</dbReference>
<dbReference type="PDB" id="6HHV">
    <property type="method" value="X-ray"/>
    <property type="resolution" value="2.18 A"/>
    <property type="chains" value="A/B=1-580"/>
</dbReference>
<dbReference type="PDB" id="6HHW">
    <property type="method" value="X-ray"/>
    <property type="resolution" value="2.20 A"/>
    <property type="chains" value="A/B=1-580"/>
</dbReference>
<dbReference type="PDB" id="6HHX">
    <property type="method" value="X-ray"/>
    <property type="resolution" value="2.10 A"/>
    <property type="chains" value="A/B=1-580"/>
</dbReference>
<dbReference type="PDB" id="6SJC">
    <property type="method" value="X-ray"/>
    <property type="resolution" value="2.23 A"/>
    <property type="chains" value="A/B=1-580"/>
</dbReference>
<dbReference type="PDB" id="7AP4">
    <property type="method" value="X-ray"/>
    <property type="resolution" value="2.15 A"/>
    <property type="chains" value="A/B=1-580"/>
</dbReference>
<dbReference type="PDBsum" id="6HHV"/>
<dbReference type="PDBsum" id="6HHW"/>
<dbReference type="PDBsum" id="6HHX"/>
<dbReference type="PDBsum" id="6SJC"/>
<dbReference type="PDBsum" id="7AP4"/>
<dbReference type="SMR" id="Q5SKD2"/>
<dbReference type="EnsemblBacteria" id="BAD70534">
    <property type="protein sequence ID" value="BAD70534"/>
    <property type="gene ID" value="BAD70534"/>
</dbReference>
<dbReference type="GeneID" id="3169335"/>
<dbReference type="KEGG" id="ttj:TTHA0711"/>
<dbReference type="PATRIC" id="fig|300852.9.peg.705"/>
<dbReference type="eggNOG" id="COG0173">
    <property type="taxonomic scope" value="Bacteria"/>
</dbReference>
<dbReference type="HOGENOM" id="CLU_014330_3_2_0"/>
<dbReference type="PhylomeDB" id="Q5SKD2"/>
<dbReference type="Proteomes" id="UP000000532">
    <property type="component" value="Chromosome"/>
</dbReference>
<dbReference type="GO" id="GO:0005737">
    <property type="term" value="C:cytoplasm"/>
    <property type="evidence" value="ECO:0007669"/>
    <property type="project" value="UniProtKB-SubCell"/>
</dbReference>
<dbReference type="GO" id="GO:0004815">
    <property type="term" value="F:aspartate-tRNA ligase activity"/>
    <property type="evidence" value="ECO:0007669"/>
    <property type="project" value="UniProtKB-UniRule"/>
</dbReference>
<dbReference type="GO" id="GO:0005524">
    <property type="term" value="F:ATP binding"/>
    <property type="evidence" value="ECO:0007669"/>
    <property type="project" value="UniProtKB-UniRule"/>
</dbReference>
<dbReference type="GO" id="GO:0003676">
    <property type="term" value="F:nucleic acid binding"/>
    <property type="evidence" value="ECO:0007669"/>
    <property type="project" value="InterPro"/>
</dbReference>
<dbReference type="GO" id="GO:0006422">
    <property type="term" value="P:aspartyl-tRNA aminoacylation"/>
    <property type="evidence" value="ECO:0007669"/>
    <property type="project" value="UniProtKB-UniRule"/>
</dbReference>
<dbReference type="CDD" id="cd00777">
    <property type="entry name" value="AspRS_core"/>
    <property type="match status" value="1"/>
</dbReference>
<dbReference type="CDD" id="cd04317">
    <property type="entry name" value="EcAspRS_like_N"/>
    <property type="match status" value="1"/>
</dbReference>
<dbReference type="Gene3D" id="3.30.930.10">
    <property type="entry name" value="Bira Bifunctional Protein, Domain 2"/>
    <property type="match status" value="1"/>
</dbReference>
<dbReference type="Gene3D" id="3.30.1360.30">
    <property type="entry name" value="GAD-like domain"/>
    <property type="match status" value="1"/>
</dbReference>
<dbReference type="Gene3D" id="2.40.50.140">
    <property type="entry name" value="Nucleic acid-binding proteins"/>
    <property type="match status" value="1"/>
</dbReference>
<dbReference type="HAMAP" id="MF_00044">
    <property type="entry name" value="Asp_tRNA_synth_type1"/>
    <property type="match status" value="1"/>
</dbReference>
<dbReference type="InterPro" id="IPR004364">
    <property type="entry name" value="Aa-tRNA-synt_II"/>
</dbReference>
<dbReference type="InterPro" id="IPR006195">
    <property type="entry name" value="aa-tRNA-synth_II"/>
</dbReference>
<dbReference type="InterPro" id="IPR045864">
    <property type="entry name" value="aa-tRNA-synth_II/BPL/LPL"/>
</dbReference>
<dbReference type="InterPro" id="IPR004524">
    <property type="entry name" value="Asp-tRNA-ligase_1"/>
</dbReference>
<dbReference type="InterPro" id="IPR047089">
    <property type="entry name" value="Asp-tRNA-ligase_1_N"/>
</dbReference>
<dbReference type="InterPro" id="IPR002312">
    <property type="entry name" value="Asp/Asn-tRNA-synth_IIb"/>
</dbReference>
<dbReference type="InterPro" id="IPR047090">
    <property type="entry name" value="AspRS_core"/>
</dbReference>
<dbReference type="InterPro" id="IPR004115">
    <property type="entry name" value="GAD-like_sf"/>
</dbReference>
<dbReference type="InterPro" id="IPR029351">
    <property type="entry name" value="GAD_dom"/>
</dbReference>
<dbReference type="InterPro" id="IPR012340">
    <property type="entry name" value="NA-bd_OB-fold"/>
</dbReference>
<dbReference type="InterPro" id="IPR004365">
    <property type="entry name" value="NA-bd_OB_tRNA"/>
</dbReference>
<dbReference type="NCBIfam" id="TIGR00459">
    <property type="entry name" value="aspS_bact"/>
    <property type="match status" value="1"/>
</dbReference>
<dbReference type="NCBIfam" id="NF001750">
    <property type="entry name" value="PRK00476.1"/>
    <property type="match status" value="1"/>
</dbReference>
<dbReference type="PANTHER" id="PTHR22594:SF5">
    <property type="entry name" value="ASPARTATE--TRNA LIGASE, MITOCHONDRIAL"/>
    <property type="match status" value="1"/>
</dbReference>
<dbReference type="PANTHER" id="PTHR22594">
    <property type="entry name" value="ASPARTYL/LYSYL-TRNA SYNTHETASE"/>
    <property type="match status" value="1"/>
</dbReference>
<dbReference type="Pfam" id="PF02938">
    <property type="entry name" value="GAD"/>
    <property type="match status" value="1"/>
</dbReference>
<dbReference type="Pfam" id="PF00152">
    <property type="entry name" value="tRNA-synt_2"/>
    <property type="match status" value="1"/>
</dbReference>
<dbReference type="Pfam" id="PF01336">
    <property type="entry name" value="tRNA_anti-codon"/>
    <property type="match status" value="1"/>
</dbReference>
<dbReference type="PRINTS" id="PR01042">
    <property type="entry name" value="TRNASYNTHASP"/>
</dbReference>
<dbReference type="SUPFAM" id="SSF55681">
    <property type="entry name" value="Class II aaRS and biotin synthetases"/>
    <property type="match status" value="1"/>
</dbReference>
<dbReference type="SUPFAM" id="SSF55261">
    <property type="entry name" value="GAD domain-like"/>
    <property type="match status" value="1"/>
</dbReference>
<dbReference type="SUPFAM" id="SSF50249">
    <property type="entry name" value="Nucleic acid-binding proteins"/>
    <property type="match status" value="1"/>
</dbReference>
<dbReference type="PROSITE" id="PS50862">
    <property type="entry name" value="AA_TRNA_LIGASE_II"/>
    <property type="match status" value="1"/>
</dbReference>
<organism>
    <name type="scientific">Thermus thermophilus (strain ATCC 27634 / DSM 579 / HB8)</name>
    <dbReference type="NCBI Taxonomy" id="300852"/>
    <lineage>
        <taxon>Bacteria</taxon>
        <taxon>Thermotogati</taxon>
        <taxon>Deinococcota</taxon>
        <taxon>Deinococci</taxon>
        <taxon>Thermales</taxon>
        <taxon>Thermaceae</taxon>
        <taxon>Thermus</taxon>
    </lineage>
</organism>
<sequence>MRRTHYAGSLRETHVGEEVVLEGWVNRRRDLGGLIFLDLRDREGLVQLVAHPASPAYATAERVRPEWVVRAKGLVRLRPEPNPRLATGRVEVELSALEVLAEAKTPPFPVDAGWRGEEEKEASEELRLKYRYLDLRRRRMQENLRLRHRVIKAIWDFLDREGFVQVETPFLTKSTPEGARDFLVPYRHEPGLFYALPQSPQLFKQMLMVAGLDRYFQIARCFRDEDLRADRQPDFTQLDLEMSFVEVEDVLELNERLMAHVFREALGVELPLPFPRLSYEEAMERYGSDKPDLRFGLELKEVGPLFRQSGFRVFQEAESVKALALPKALSRKEVAELEEVAKRHKAQGLAWARVEEGGFSGGVAKFLEPVREALLQATEARPGDTLLFVAGPRKVAATALGAVRLRAADLLGLKREGFRFLWVVDFPLLEWDEEEEAWTYMHHPFTSPHPEDLPLLEKDPGRVRALAYDLVLNGVEVGGGSIRIHDPRLQARVFRLLGIGEEEQREKFGFFLEALEYGAPPHGGIAWGLDRLLALMTGSPSIREVIAFPKNKEGKDPLTGAPSPVPEEQLRELGLMVVRP</sequence>
<reference key="1">
    <citation type="journal article" date="1993" name="FEBS Lett.">
        <title>Sequence, overproduction and crystallization of aspartyl-tRNA synthetase from Thermus thermophilus. Implications for the structure of prokaryotic aspartyl-tRNA synthetases.</title>
        <authorList>
            <person name="Poterszman A."/>
            <person name="Plateau P."/>
            <person name="Moras D."/>
            <person name="Blanquet S."/>
            <person name="Mazuric M.-H."/>
            <person name="Kreutzer R."/>
            <person name="Kern D."/>
        </authorList>
    </citation>
    <scope>NUCLEOTIDE SEQUENCE [GENOMIC DNA]</scope>
    <source>
        <strain>ATCC 27634 / DSM 579 / HB8</strain>
    </source>
</reference>
<reference key="2">
    <citation type="submission" date="2004-11" db="EMBL/GenBank/DDBJ databases">
        <title>Complete genome sequence of Thermus thermophilus HB8.</title>
        <authorList>
            <person name="Masui R."/>
            <person name="Kurokawa K."/>
            <person name="Nakagawa N."/>
            <person name="Tokunaga F."/>
            <person name="Koyama Y."/>
            <person name="Shibata T."/>
            <person name="Oshima T."/>
            <person name="Yokoyama S."/>
            <person name="Yasunaga T."/>
            <person name="Kuramitsu S."/>
        </authorList>
    </citation>
    <scope>NUCLEOTIDE SEQUENCE [LARGE SCALE GENOMIC DNA]</scope>
    <source>
        <strain>ATCC 27634 / DSM 579 / HB8</strain>
    </source>
</reference>
<reference key="3">
    <citation type="journal article" date="1997" name="Biochemistry">
        <title>Existence of two distinct aspartyl-tRNA synthetases in Thermus thermophilus. Structural and biochemical properties of the two enzymes.</title>
        <authorList>
            <person name="Becker H.D."/>
            <person name="Reinbolt J."/>
            <person name="Kreutzer R."/>
            <person name="Giege R."/>
            <person name="Kern D."/>
        </authorList>
    </citation>
    <scope>PROTEIN SEQUENCE OF 1-52; 209-230 AND 259-283</scope>
    <scope>FUNCTION</scope>
    <scope>CATALYTIC ACTIVITY</scope>
    <scope>KINETIC PARAMETERS</scope>
    <scope>SUBUNIT</scope>
    <scope>INDUCTION</scope>
    <source>
        <strain>ATCC 27634 / DSM 579 / HB8</strain>
    </source>
</reference>
<reference key="4">
    <citation type="journal article" date="2000" name="Biochemistry">
        <title>Thermus thermophilus contains an eubacterial and an archaebacterial aspartyl-tRNA synthetase.</title>
        <authorList>
            <person name="Becker H.D."/>
            <person name="Roy H."/>
            <person name="Moulinier L."/>
            <person name="Mazauric M.H."/>
            <person name="Keith G."/>
            <person name="Kern D."/>
        </authorList>
    </citation>
    <scope>GENE NAME</scope>
    <scope>FUNCTION AS A DISCRIMINATING ASPRS</scope>
    <scope>CATALYTIC ACTIVITY</scope>
    <scope>SUBSTRATE SPECIFICITY</scope>
    <scope>KINETIC PARAMETERS</scope>
    <source>
        <strain>ATCC 27634 / DSM 579 / HB8</strain>
    </source>
</reference>
<keyword id="KW-0002">3D-structure</keyword>
<keyword id="KW-0030">Aminoacyl-tRNA synthetase</keyword>
<keyword id="KW-0067">ATP-binding</keyword>
<keyword id="KW-0963">Cytoplasm</keyword>
<keyword id="KW-0903">Direct protein sequencing</keyword>
<keyword id="KW-0436">Ligase</keyword>
<keyword id="KW-0547">Nucleotide-binding</keyword>
<keyword id="KW-0648">Protein biosynthesis</keyword>
<keyword id="KW-1185">Reference proteome</keyword>
<feature type="chain" id="PRO_0000110970" description="Aspartate--tRNA(Asp) ligase">
    <location>
        <begin position="1"/>
        <end position="580"/>
    </location>
</feature>
<feature type="region of interest" description="Aspartate" evidence="1">
    <location>
        <begin position="201"/>
        <end position="204"/>
    </location>
</feature>
<feature type="binding site" evidence="1">
    <location>
        <position position="177"/>
    </location>
    <ligand>
        <name>L-aspartate</name>
        <dbReference type="ChEBI" id="CHEBI:29991"/>
    </ligand>
</feature>
<feature type="binding site" evidence="1">
    <location>
        <begin position="223"/>
        <end position="225"/>
    </location>
    <ligand>
        <name>ATP</name>
        <dbReference type="ChEBI" id="CHEBI:30616"/>
    </ligand>
</feature>
<feature type="binding site" evidence="1">
    <location>
        <position position="223"/>
    </location>
    <ligand>
        <name>L-aspartate</name>
        <dbReference type="ChEBI" id="CHEBI:29991"/>
    </ligand>
</feature>
<feature type="binding site" evidence="1">
    <location>
        <position position="232"/>
    </location>
    <ligand>
        <name>ATP</name>
        <dbReference type="ChEBI" id="CHEBI:30616"/>
    </ligand>
</feature>
<feature type="binding site" evidence="1">
    <location>
        <position position="442"/>
    </location>
    <ligand>
        <name>L-aspartate</name>
        <dbReference type="ChEBI" id="CHEBI:29991"/>
    </ligand>
</feature>
<feature type="binding site" evidence="1">
    <location>
        <position position="476"/>
    </location>
    <ligand>
        <name>ATP</name>
        <dbReference type="ChEBI" id="CHEBI:30616"/>
    </ligand>
</feature>
<feature type="binding site" evidence="1">
    <location>
        <position position="483"/>
    </location>
    <ligand>
        <name>L-aspartate</name>
        <dbReference type="ChEBI" id="CHEBI:29991"/>
    </ligand>
</feature>
<feature type="binding site" evidence="1">
    <location>
        <begin position="528"/>
        <end position="531"/>
    </location>
    <ligand>
        <name>ATP</name>
        <dbReference type="ChEBI" id="CHEBI:30616"/>
    </ligand>
</feature>
<feature type="helix" evidence="4">
    <location>
        <begin position="7"/>
        <end position="9"/>
    </location>
</feature>
<feature type="helix" evidence="4">
    <location>
        <begin position="12"/>
        <end position="14"/>
    </location>
</feature>
<feature type="strand" evidence="4">
    <location>
        <begin position="18"/>
        <end position="31"/>
    </location>
</feature>
<feature type="strand" evidence="4">
    <location>
        <begin position="34"/>
        <end position="41"/>
    </location>
</feature>
<feature type="strand" evidence="4">
    <location>
        <begin position="44"/>
        <end position="50"/>
    </location>
</feature>
<feature type="helix" evidence="4">
    <location>
        <begin position="57"/>
        <end position="62"/>
    </location>
</feature>
<feature type="strand" evidence="4">
    <location>
        <begin position="68"/>
        <end position="77"/>
    </location>
</feature>
<feature type="turn" evidence="4">
    <location>
        <begin position="86"/>
        <end position="89"/>
    </location>
</feature>
<feature type="strand" evidence="4">
    <location>
        <begin position="90"/>
        <end position="101"/>
    </location>
</feature>
<feature type="helix" evidence="4">
    <location>
        <begin position="113"/>
        <end position="115"/>
    </location>
</feature>
<feature type="helix" evidence="4">
    <location>
        <begin position="124"/>
        <end position="129"/>
    </location>
</feature>
<feature type="helix" evidence="4">
    <location>
        <begin position="131"/>
        <end position="134"/>
    </location>
</feature>
<feature type="helix" evidence="4">
    <location>
        <begin position="138"/>
        <end position="160"/>
    </location>
</feature>
<feature type="strand" evidence="4">
    <location>
        <begin position="170"/>
        <end position="172"/>
    </location>
</feature>
<feature type="strand" evidence="4">
    <location>
        <begin position="177"/>
        <end position="179"/>
    </location>
</feature>
<feature type="strand" evidence="4">
    <location>
        <begin position="183"/>
        <end position="185"/>
    </location>
</feature>
<feature type="strand" evidence="4">
    <location>
        <begin position="193"/>
        <end position="195"/>
    </location>
</feature>
<feature type="helix" evidence="4">
    <location>
        <begin position="201"/>
        <end position="209"/>
    </location>
</feature>
<feature type="strand" evidence="4">
    <location>
        <begin position="214"/>
        <end position="222"/>
    </location>
</feature>
<feature type="turn" evidence="4">
    <location>
        <begin position="228"/>
        <end position="230"/>
    </location>
</feature>
<feature type="strand" evidence="4">
    <location>
        <begin position="233"/>
        <end position="244"/>
    </location>
</feature>
<feature type="helix" evidence="4">
    <location>
        <begin position="247"/>
        <end position="266"/>
    </location>
</feature>
<feature type="strand" evidence="4">
    <location>
        <begin position="276"/>
        <end position="278"/>
    </location>
</feature>
<feature type="helix" evidence="4">
    <location>
        <begin position="279"/>
        <end position="286"/>
    </location>
</feature>
<feature type="strand" evidence="4">
    <location>
        <begin position="287"/>
        <end position="290"/>
    </location>
</feature>
<feature type="helix" evidence="4">
    <location>
        <begin position="303"/>
        <end position="305"/>
    </location>
</feature>
<feature type="helix" evidence="4">
    <location>
        <begin position="312"/>
        <end position="315"/>
    </location>
</feature>
<feature type="strand" evidence="4">
    <location>
        <begin position="318"/>
        <end position="327"/>
    </location>
</feature>
<feature type="helix" evidence="4">
    <location>
        <begin position="331"/>
        <end position="343"/>
    </location>
</feature>
<feature type="strand" evidence="4">
    <location>
        <begin position="350"/>
        <end position="354"/>
    </location>
</feature>
<feature type="strand" evidence="4">
    <location>
        <begin position="356"/>
        <end position="361"/>
    </location>
</feature>
<feature type="helix" evidence="4">
    <location>
        <begin position="364"/>
        <end position="367"/>
    </location>
</feature>
<feature type="helix" evidence="4">
    <location>
        <begin position="368"/>
        <end position="370"/>
    </location>
</feature>
<feature type="helix" evidence="4">
    <location>
        <begin position="371"/>
        <end position="378"/>
    </location>
</feature>
<feature type="strand" evidence="4">
    <location>
        <begin position="385"/>
        <end position="392"/>
    </location>
</feature>
<feature type="helix" evidence="4">
    <location>
        <begin position="393"/>
        <end position="410"/>
    </location>
</feature>
<feature type="strand" evidence="4">
    <location>
        <begin position="420"/>
        <end position="424"/>
    </location>
</feature>
<feature type="strand" evidence="4">
    <location>
        <begin position="427"/>
        <end position="430"/>
    </location>
</feature>
<feature type="turn" evidence="4">
    <location>
        <begin position="433"/>
        <end position="436"/>
    </location>
</feature>
<feature type="strand" evidence="4">
    <location>
        <begin position="439"/>
        <end position="442"/>
    </location>
</feature>
<feature type="helix" evidence="4">
    <location>
        <begin position="450"/>
        <end position="454"/>
    </location>
</feature>
<feature type="helix" evidence="4">
    <location>
        <begin position="455"/>
        <end position="458"/>
    </location>
</feature>
<feature type="helix" evidence="4">
    <location>
        <begin position="460"/>
        <end position="462"/>
    </location>
</feature>
<feature type="strand" evidence="4">
    <location>
        <begin position="464"/>
        <end position="472"/>
    </location>
</feature>
<feature type="strand" evidence="4">
    <location>
        <begin position="475"/>
        <end position="483"/>
    </location>
</feature>
<feature type="helix" evidence="4">
    <location>
        <begin position="487"/>
        <end position="497"/>
    </location>
</feature>
<feature type="helix" evidence="4">
    <location>
        <begin position="501"/>
        <end position="514"/>
    </location>
</feature>
<feature type="strand" evidence="4">
    <location>
        <begin position="522"/>
        <end position="528"/>
    </location>
</feature>
<feature type="helix" evidence="4">
    <location>
        <begin position="529"/>
        <end position="537"/>
    </location>
</feature>
<feature type="helix" evidence="4">
    <location>
        <begin position="542"/>
        <end position="545"/>
    </location>
</feature>
<feature type="strand" evidence="4">
    <location>
        <begin position="546"/>
        <end position="548"/>
    </location>
</feature>
<feature type="turn" evidence="4">
    <location>
        <begin position="557"/>
        <end position="559"/>
    </location>
</feature>
<feature type="strand" evidence="5">
    <location>
        <begin position="562"/>
        <end position="564"/>
    </location>
</feature>
<feature type="helix" evidence="4">
    <location>
        <begin position="567"/>
        <end position="571"/>
    </location>
</feature>
<feature type="turn" evidence="4">
    <location>
        <begin position="572"/>
        <end position="574"/>
    </location>
</feature>
<feature type="strand" evidence="4">
    <location>
        <begin position="575"/>
        <end position="577"/>
    </location>
</feature>
<comment type="function">
    <text evidence="2 3">Catalyzes the attachment of L-aspartate to tRNA(Asp) in a two-step reaction: L-aspartate is first activated by ATP to form Asp-AMP and then transferred to the acceptor end of tRNA(Asp). Is specific for tRNA(Asp) since it aspartylates tRNA(Asn) 3 orders of magnitude less efficiently than tRNA(Asp).</text>
</comment>
<comment type="catalytic activity">
    <reaction evidence="1 2 3">
        <text>tRNA(Asp) + L-aspartate + ATP = L-aspartyl-tRNA(Asp) + AMP + diphosphate</text>
        <dbReference type="Rhea" id="RHEA:19649"/>
        <dbReference type="Rhea" id="RHEA-COMP:9660"/>
        <dbReference type="Rhea" id="RHEA-COMP:9678"/>
        <dbReference type="ChEBI" id="CHEBI:29991"/>
        <dbReference type="ChEBI" id="CHEBI:30616"/>
        <dbReference type="ChEBI" id="CHEBI:33019"/>
        <dbReference type="ChEBI" id="CHEBI:78442"/>
        <dbReference type="ChEBI" id="CHEBI:78516"/>
        <dbReference type="ChEBI" id="CHEBI:456215"/>
        <dbReference type="EC" id="6.1.1.12"/>
    </reaction>
</comment>
<comment type="biophysicochemical properties">
    <kinetics>
        <KM evidence="2 3">9 uM for L-aspartate (at 37 degrees Celsius)</KM>
        <KM evidence="2 3">30 uM for L-aspartate (at 70 degrees Celsius)</KM>
        <KM evidence="2 3">120 uM for ATP (at 37 degrees Celsius)</KM>
        <KM evidence="2 3">280 uM for ATP (at 70 degrees Celsius)</KM>
        <KM evidence="2 3">0.044 uM for tRNA(Asp) (at 37 degrees Celsius)</KM>
        <KM evidence="2 3">0.03 uM for tRNA(Asp) (at 70 degrees Celsius)</KM>
        <KM evidence="2 3">3.4 uM for tRNA(Asn) (at 70 degrees Celsius)</KM>
        <text>kcat is 0.77 sec(-1) for tRNA(Asp) aspartylation at 37 degrees Celsius and 2.7 sec(-1) at 70 degrees Celsius. kcat is 0.12 sec(-1) for tRNA(Asn) aspartylation at 70 degrees Celsius.</text>
    </kinetics>
</comment>
<comment type="subunit">
    <text evidence="1 3">Homodimer.</text>
</comment>
<comment type="subcellular location">
    <subcellularLocation>
        <location evidence="1">Cytoplasm</location>
    </subcellularLocation>
</comment>
<comment type="induction">
    <text evidence="3">Constitutively expressed in a constant ratio along the growth of the bacterium.</text>
</comment>
<comment type="similarity">
    <text evidence="1">Belongs to the class-II aminoacyl-tRNA synthetase family. Type 1 subfamily.</text>
</comment>
<name>SYD_THET8</name>
<evidence type="ECO:0000255" key="1">
    <source>
        <dbReference type="HAMAP-Rule" id="MF_00044"/>
    </source>
</evidence>
<evidence type="ECO:0000269" key="2">
    <source>
    </source>
</evidence>
<evidence type="ECO:0000269" key="3">
    <source>
    </source>
</evidence>
<evidence type="ECO:0007829" key="4">
    <source>
        <dbReference type="PDB" id="6HHX"/>
    </source>
</evidence>
<evidence type="ECO:0007829" key="5">
    <source>
        <dbReference type="PDB" id="7AP4"/>
    </source>
</evidence>
<gene>
    <name type="primary">aspS1</name>
    <name type="ordered locus">TTHA0711</name>
</gene>
<protein>
    <recommendedName>
        <fullName>Aspartate--tRNA(Asp) ligase</fullName>
        <ecNumber>6.1.1.12</ecNumber>
    </recommendedName>
    <alternativeName>
        <fullName>Aspartyl-tRNA synthetase 1</fullName>
        <shortName>AspRS1</shortName>
    </alternativeName>
    <alternativeName>
        <fullName>Discriminating aspartyl-tRNA synthetase</fullName>
        <shortName>D-AspRS</shortName>
    </alternativeName>
</protein>
<proteinExistence type="evidence at protein level"/>
<accession>Q5SKD2</accession>